<proteinExistence type="evidence at protein level"/>
<protein>
    <recommendedName>
        <fullName>Mating-type M-specific polypeptide Mi</fullName>
    </recommendedName>
</protein>
<reference key="1">
    <citation type="journal article" date="2002" name="Nature">
        <title>The genome sequence of Schizosaccharomyces pombe.</title>
        <authorList>
            <person name="Wood V."/>
            <person name="Gwilliam R."/>
            <person name="Rajandream M.A."/>
            <person name="Lyne M.H."/>
            <person name="Lyne R."/>
            <person name="Stewart A."/>
            <person name="Sgouros J.G."/>
            <person name="Peat N."/>
            <person name="Hayles J."/>
            <person name="Baker S.G."/>
            <person name="Basham D."/>
            <person name="Bowman S."/>
            <person name="Brooks K."/>
            <person name="Brown D."/>
            <person name="Brown S."/>
            <person name="Chillingworth T."/>
            <person name="Churcher C.M."/>
            <person name="Collins M."/>
            <person name="Connor R."/>
            <person name="Cronin A."/>
            <person name="Davis P."/>
            <person name="Feltwell T."/>
            <person name="Fraser A."/>
            <person name="Gentles S."/>
            <person name="Goble A."/>
            <person name="Hamlin N."/>
            <person name="Harris D.E."/>
            <person name="Hidalgo J."/>
            <person name="Hodgson G."/>
            <person name="Holroyd S."/>
            <person name="Hornsby T."/>
            <person name="Howarth S."/>
            <person name="Huckle E.J."/>
            <person name="Hunt S."/>
            <person name="Jagels K."/>
            <person name="James K.D."/>
            <person name="Jones L."/>
            <person name="Jones M."/>
            <person name="Leather S."/>
            <person name="McDonald S."/>
            <person name="McLean J."/>
            <person name="Mooney P."/>
            <person name="Moule S."/>
            <person name="Mungall K.L."/>
            <person name="Murphy L.D."/>
            <person name="Niblett D."/>
            <person name="Odell C."/>
            <person name="Oliver K."/>
            <person name="O'Neil S."/>
            <person name="Pearson D."/>
            <person name="Quail M.A."/>
            <person name="Rabbinowitsch E."/>
            <person name="Rutherford K.M."/>
            <person name="Rutter S."/>
            <person name="Saunders D."/>
            <person name="Seeger K."/>
            <person name="Sharp S."/>
            <person name="Skelton J."/>
            <person name="Simmonds M.N."/>
            <person name="Squares R."/>
            <person name="Squares S."/>
            <person name="Stevens K."/>
            <person name="Taylor K."/>
            <person name="Taylor R.G."/>
            <person name="Tivey A."/>
            <person name="Walsh S.V."/>
            <person name="Warren T."/>
            <person name="Whitehead S."/>
            <person name="Woodward J.R."/>
            <person name="Volckaert G."/>
            <person name="Aert R."/>
            <person name="Robben J."/>
            <person name="Grymonprez B."/>
            <person name="Weltjens I."/>
            <person name="Vanstreels E."/>
            <person name="Rieger M."/>
            <person name="Schaefer M."/>
            <person name="Mueller-Auer S."/>
            <person name="Gabel C."/>
            <person name="Fuchs M."/>
            <person name="Duesterhoeft A."/>
            <person name="Fritzc C."/>
            <person name="Holzer E."/>
            <person name="Moestl D."/>
            <person name="Hilbert H."/>
            <person name="Borzym K."/>
            <person name="Langer I."/>
            <person name="Beck A."/>
            <person name="Lehrach H."/>
            <person name="Reinhardt R."/>
            <person name="Pohl T.M."/>
            <person name="Eger P."/>
            <person name="Zimmermann W."/>
            <person name="Wedler H."/>
            <person name="Wambutt R."/>
            <person name="Purnelle B."/>
            <person name="Goffeau A."/>
            <person name="Cadieu E."/>
            <person name="Dreano S."/>
            <person name="Gloux S."/>
            <person name="Lelaure V."/>
            <person name="Mottier S."/>
            <person name="Galibert F."/>
            <person name="Aves S.J."/>
            <person name="Xiang Z."/>
            <person name="Hunt C."/>
            <person name="Moore K."/>
            <person name="Hurst S.M."/>
            <person name="Lucas M."/>
            <person name="Rochet M."/>
            <person name="Gaillardin C."/>
            <person name="Tallada V.A."/>
            <person name="Garzon A."/>
            <person name="Thode G."/>
            <person name="Daga R.R."/>
            <person name="Cruzado L."/>
            <person name="Jimenez J."/>
            <person name="Sanchez M."/>
            <person name="del Rey F."/>
            <person name="Benito J."/>
            <person name="Dominguez A."/>
            <person name="Revuelta J.L."/>
            <person name="Moreno S."/>
            <person name="Armstrong J."/>
            <person name="Forsburg S.L."/>
            <person name="Cerutti L."/>
            <person name="Lowe T."/>
            <person name="McCombie W.R."/>
            <person name="Paulsen I."/>
            <person name="Potashkin J."/>
            <person name="Shpakovski G.V."/>
            <person name="Ussery D."/>
            <person name="Barrell B.G."/>
            <person name="Nurse P."/>
        </authorList>
    </citation>
    <scope>NUCLEOTIDE SEQUENCE [LARGE SCALE GENOMIC DNA]</scope>
    <source>
        <strain>972 / ATCC 24843</strain>
    </source>
</reference>
<reference key="2">
    <citation type="journal article" date="1988" name="EMBO J.">
        <title>Four mating-type genes control sexual differentiation in the fission yeast.</title>
        <authorList>
            <person name="Kelly M."/>
            <person name="Burke J."/>
            <person name="Smith M."/>
            <person name="Klar A."/>
            <person name="Beach D."/>
        </authorList>
    </citation>
    <scope>FUNCTION</scope>
</reference>
<reference key="3">
    <citation type="journal article" date="2006" name="Nat. Biotechnol.">
        <title>ORFeome cloning and global analysis of protein localization in the fission yeast Schizosaccharomyces pombe.</title>
        <authorList>
            <person name="Matsuyama A."/>
            <person name="Arai R."/>
            <person name="Yashiroda Y."/>
            <person name="Shirai A."/>
            <person name="Kamata A."/>
            <person name="Sekido S."/>
            <person name="Kobayashi Y."/>
            <person name="Hashimoto A."/>
            <person name="Hamamoto M."/>
            <person name="Hiraoka Y."/>
            <person name="Horinouchi S."/>
            <person name="Yoshida M."/>
        </authorList>
    </citation>
    <scope>SUBCELLULAR LOCATION [LARGE SCALE ANALYSIS]</scope>
</reference>
<comment type="function">
    <text evidence="2">Mating type proteins are sequence specific DNA-binding proteins that act as master switches in yeast differentiation by controlling gene expression in a cell type-specific fashion. Required for meiosis, but plays no role in conjugation.</text>
</comment>
<comment type="interaction">
    <interactant intactId="EBI-20725384">
        <id>P0CY15</id>
    </interactant>
    <interactant intactId="EBI-20725367">
        <id>P10842</id>
        <label>mat2-Pi</label>
    </interactant>
    <organismsDiffer>true</organismsDiffer>
    <experiments>2</experiments>
</comment>
<comment type="subcellular location">
    <subcellularLocation>
        <location evidence="1">Cytoplasm</location>
    </subcellularLocation>
    <subcellularLocation>
        <location evidence="1">Nucleus</location>
    </subcellularLocation>
</comment>
<comment type="miscellaneous">
    <text>There are three genetic loci for mating type genes in S.pombe, mat1, mat2-P and mat3-M. Cell type is determined by the alternate allele present in mat1, either P (plus) in a h+ or M (minus) in a h- cell. Mat2-P and mat3-M serve as donor of information that is transposed to mat1 during a switch of mating type.</text>
</comment>
<gene>
    <name type="primary">mat1-Mi</name>
    <name type="synonym">mat1-Mm</name>
    <name type="synonym">matMi</name>
    <name type="ORF">SPBC23G7.17c</name>
</gene>
<feature type="chain" id="PRO_0000410972" description="Mating-type M-specific polypeptide Mi">
    <location>
        <begin position="1"/>
        <end position="42"/>
    </location>
</feature>
<organism>
    <name type="scientific">Schizosaccharomyces pombe (strain 972 / ATCC 24843)</name>
    <name type="common">Fission yeast</name>
    <dbReference type="NCBI Taxonomy" id="284812"/>
    <lineage>
        <taxon>Eukaryota</taxon>
        <taxon>Fungi</taxon>
        <taxon>Dikarya</taxon>
        <taxon>Ascomycota</taxon>
        <taxon>Taphrinomycotina</taxon>
        <taxon>Schizosaccharomycetes</taxon>
        <taxon>Schizosaccharomycetales</taxon>
        <taxon>Schizosaccharomycetaceae</taxon>
        <taxon>Schizosaccharomyces</taxon>
    </lineage>
</organism>
<dbReference type="EMBL" id="CU329671">
    <property type="protein sequence ID" value="CAD99125.1"/>
    <property type="molecule type" value="Genomic_DNA"/>
</dbReference>
<dbReference type="PIR" id="S00571">
    <property type="entry name" value="S00571"/>
</dbReference>
<dbReference type="RefSeq" id="NP_001018808.1">
    <property type="nucleotide sequence ID" value="NM_001021772.1"/>
</dbReference>
<dbReference type="RefSeq" id="NP_595874.1">
    <property type="nucleotide sequence ID" value="NM_001021780.1"/>
</dbReference>
<dbReference type="SMR" id="P0CY15"/>
<dbReference type="BioGRID" id="280337">
    <property type="interactions" value="1"/>
</dbReference>
<dbReference type="IntAct" id="P0CY15">
    <property type="interactions" value="1"/>
</dbReference>
<dbReference type="STRING" id="284812.P0CY15"/>
<dbReference type="PaxDb" id="4896-SPBC1711.01c.1"/>
<dbReference type="EnsemblFungi" id="SPBC1711.01c.1">
    <property type="protein sequence ID" value="SPBC1711.01c.1:pep"/>
    <property type="gene ID" value="SPBC1711.01c"/>
</dbReference>
<dbReference type="EnsemblFungi" id="SPBC23G7.17c.1">
    <property type="protein sequence ID" value="SPBC23G7.17c.1:pep"/>
    <property type="gene ID" value="SPBC23G7.17c"/>
</dbReference>
<dbReference type="EnsemblFungi" id="SPMTR.03.1">
    <property type="protein sequence ID" value="SPMTR.03.1:pep"/>
    <property type="gene ID" value="SPMTR.03"/>
</dbReference>
<dbReference type="GeneID" id="2539637"/>
<dbReference type="GeneID" id="3361261"/>
<dbReference type="KEGG" id="spo:2539637"/>
<dbReference type="KEGG" id="spo:3361261"/>
<dbReference type="PomBase" id="SPBC23G7.17c">
    <property type="gene designation" value="mat1-Mi"/>
</dbReference>
<dbReference type="VEuPathDB" id="FungiDB:SPBC1711.01c"/>
<dbReference type="VEuPathDB" id="FungiDB:SPBC23G7.17c"/>
<dbReference type="VEuPathDB" id="FungiDB:SPMTR.03"/>
<dbReference type="HOGENOM" id="CLU_3260800_0_0_1"/>
<dbReference type="InParanoid" id="P0CY15"/>
<dbReference type="PRO" id="PR:P0CY15"/>
<dbReference type="Proteomes" id="UP000002485">
    <property type="component" value="Chromosome II"/>
</dbReference>
<dbReference type="GO" id="GO:0000785">
    <property type="term" value="C:chromatin"/>
    <property type="evidence" value="ECO:0000314"/>
    <property type="project" value="PomBase"/>
</dbReference>
<dbReference type="GO" id="GO:0005737">
    <property type="term" value="C:cytoplasm"/>
    <property type="evidence" value="ECO:0000269"/>
    <property type="project" value="PomBase"/>
</dbReference>
<dbReference type="GO" id="GO:0005634">
    <property type="term" value="C:nucleus"/>
    <property type="evidence" value="ECO:0000269"/>
    <property type="project" value="PomBase"/>
</dbReference>
<dbReference type="GO" id="GO:0062071">
    <property type="term" value="C:Pi Mi complex"/>
    <property type="evidence" value="ECO:0000269"/>
    <property type="project" value="PomBase"/>
</dbReference>
<dbReference type="GO" id="GO:0051728">
    <property type="term" value="P:cell cycle switching, mitotic to meiotic cell cycle"/>
    <property type="evidence" value="ECO:0000315"/>
    <property type="project" value="PomBase"/>
</dbReference>
<dbReference type="GO" id="GO:0007531">
    <property type="term" value="P:mating type determination"/>
    <property type="evidence" value="ECO:0000303"/>
    <property type="project" value="PomBase"/>
</dbReference>
<dbReference type="GO" id="GO:0140538">
    <property type="term" value="P:negative regulation of conjugation with zygote"/>
    <property type="evidence" value="ECO:0000315"/>
    <property type="project" value="PomBase"/>
</dbReference>
<dbReference type="GO" id="GO:0051446">
    <property type="term" value="P:positive regulation of meiotic cell cycle"/>
    <property type="evidence" value="ECO:0000315"/>
    <property type="project" value="PomBase"/>
</dbReference>
<dbReference type="GO" id="GO:0045944">
    <property type="term" value="P:positive regulation of transcription by RNA polymerase II"/>
    <property type="evidence" value="ECO:0000314"/>
    <property type="project" value="PomBase"/>
</dbReference>
<dbReference type="GO" id="GO:0110044">
    <property type="term" value="P:regulation of cell cycle switching, mitotic to meiotic cell cycle"/>
    <property type="evidence" value="ECO:0000314"/>
    <property type="project" value="PomBase"/>
</dbReference>
<keyword id="KW-0963">Cytoplasm</keyword>
<keyword id="KW-0539">Nucleus</keyword>
<keyword id="KW-1185">Reference proteome</keyword>
<accession>P0CY15</accession>
<accession>P10839</accession>
<evidence type="ECO:0000269" key="1">
    <source>
    </source>
</evidence>
<evidence type="ECO:0000269" key="2">
    <source>
    </source>
</evidence>
<sequence length="42" mass="4858">MSAEDLFTIQILCDQIELKLASIVINSNIKLQLKRKKKTQQL</sequence>
<name>MATMI_SCHPO</name>